<proteinExistence type="inferred from homology"/>
<reference key="1">
    <citation type="journal article" date="2004" name="Nature">
        <title>Genome evolution in yeasts.</title>
        <authorList>
            <person name="Dujon B."/>
            <person name="Sherman D."/>
            <person name="Fischer G."/>
            <person name="Durrens P."/>
            <person name="Casaregola S."/>
            <person name="Lafontaine I."/>
            <person name="de Montigny J."/>
            <person name="Marck C."/>
            <person name="Neuveglise C."/>
            <person name="Talla E."/>
            <person name="Goffard N."/>
            <person name="Frangeul L."/>
            <person name="Aigle M."/>
            <person name="Anthouard V."/>
            <person name="Babour A."/>
            <person name="Barbe V."/>
            <person name="Barnay S."/>
            <person name="Blanchin S."/>
            <person name="Beckerich J.-M."/>
            <person name="Beyne E."/>
            <person name="Bleykasten C."/>
            <person name="Boisrame A."/>
            <person name="Boyer J."/>
            <person name="Cattolico L."/>
            <person name="Confanioleri F."/>
            <person name="de Daruvar A."/>
            <person name="Despons L."/>
            <person name="Fabre E."/>
            <person name="Fairhead C."/>
            <person name="Ferry-Dumazet H."/>
            <person name="Groppi A."/>
            <person name="Hantraye F."/>
            <person name="Hennequin C."/>
            <person name="Jauniaux N."/>
            <person name="Joyet P."/>
            <person name="Kachouri R."/>
            <person name="Kerrest A."/>
            <person name="Koszul R."/>
            <person name="Lemaire M."/>
            <person name="Lesur I."/>
            <person name="Ma L."/>
            <person name="Muller H."/>
            <person name="Nicaud J.-M."/>
            <person name="Nikolski M."/>
            <person name="Oztas S."/>
            <person name="Ozier-Kalogeropoulos O."/>
            <person name="Pellenz S."/>
            <person name="Potier S."/>
            <person name="Richard G.-F."/>
            <person name="Straub M.-L."/>
            <person name="Suleau A."/>
            <person name="Swennen D."/>
            <person name="Tekaia F."/>
            <person name="Wesolowski-Louvel M."/>
            <person name="Westhof E."/>
            <person name="Wirth B."/>
            <person name="Zeniou-Meyer M."/>
            <person name="Zivanovic Y."/>
            <person name="Bolotin-Fukuhara M."/>
            <person name="Thierry A."/>
            <person name="Bouchier C."/>
            <person name="Caudron B."/>
            <person name="Scarpelli C."/>
            <person name="Gaillardin C."/>
            <person name="Weissenbach J."/>
            <person name="Wincker P."/>
            <person name="Souciet J.-L."/>
        </authorList>
    </citation>
    <scope>NUCLEOTIDE SEQUENCE [LARGE SCALE GENOMIC DNA]</scope>
    <source>
        <strain>ATCC 8585 / CBS 2359 / DSM 70799 / NBRC 1267 / NRRL Y-1140 / WM37</strain>
    </source>
</reference>
<keyword id="KW-0010">Activator</keyword>
<keyword id="KW-0539">Nucleus</keyword>
<keyword id="KW-1185">Reference proteome</keyword>
<keyword id="KW-0678">Repressor</keyword>
<keyword id="KW-0804">Transcription</keyword>
<keyword id="KW-0805">Transcription regulation</keyword>
<name>SSN2_KLULA</name>
<dbReference type="EMBL" id="CR382122">
    <property type="protein sequence ID" value="CAH01984.1"/>
    <property type="molecule type" value="Genomic_DNA"/>
</dbReference>
<dbReference type="RefSeq" id="XP_451591.1">
    <property type="nucleotide sequence ID" value="XM_451591.1"/>
</dbReference>
<dbReference type="SMR" id="Q6CWU8"/>
<dbReference type="FunCoup" id="Q6CWU8">
    <property type="interactions" value="153"/>
</dbReference>
<dbReference type="STRING" id="284590.Q6CWU8"/>
<dbReference type="PaxDb" id="284590-Q6CWU8"/>
<dbReference type="KEGG" id="kla:KLLA0_B01353g"/>
<dbReference type="eggNOG" id="KOG3600">
    <property type="taxonomic scope" value="Eukaryota"/>
</dbReference>
<dbReference type="HOGENOM" id="CLU_242296_0_0_1"/>
<dbReference type="InParanoid" id="Q6CWU8"/>
<dbReference type="OMA" id="FSRELWC"/>
<dbReference type="Proteomes" id="UP000000598">
    <property type="component" value="Chromosome B"/>
</dbReference>
<dbReference type="GO" id="GO:0016592">
    <property type="term" value="C:mediator complex"/>
    <property type="evidence" value="ECO:0007669"/>
    <property type="project" value="InterPro"/>
</dbReference>
<dbReference type="GO" id="GO:0003713">
    <property type="term" value="F:transcription coactivator activity"/>
    <property type="evidence" value="ECO:0007669"/>
    <property type="project" value="TreeGrafter"/>
</dbReference>
<dbReference type="GO" id="GO:0045944">
    <property type="term" value="P:positive regulation of transcription by RNA polymerase II"/>
    <property type="evidence" value="ECO:0007669"/>
    <property type="project" value="TreeGrafter"/>
</dbReference>
<dbReference type="InterPro" id="IPR009401">
    <property type="entry name" value="Med13_C"/>
</dbReference>
<dbReference type="InterPro" id="IPR051139">
    <property type="entry name" value="Mediator_complx_sub13"/>
</dbReference>
<dbReference type="InterPro" id="IPR021643">
    <property type="entry name" value="Mediator_Med13_N"/>
</dbReference>
<dbReference type="PANTHER" id="PTHR48249">
    <property type="entry name" value="MEDIATOR OF RNA POLYMERASE II TRANSCRIPTION SUBUNIT 13"/>
    <property type="match status" value="1"/>
</dbReference>
<dbReference type="PANTHER" id="PTHR48249:SF3">
    <property type="entry name" value="MEDIATOR OF RNA POLYMERASE II TRANSCRIPTION SUBUNIT 13"/>
    <property type="match status" value="1"/>
</dbReference>
<dbReference type="Pfam" id="PF06333">
    <property type="entry name" value="Med13_C"/>
    <property type="match status" value="2"/>
</dbReference>
<dbReference type="Pfam" id="PF11597">
    <property type="entry name" value="Med13_N"/>
    <property type="match status" value="1"/>
</dbReference>
<feature type="chain" id="PRO_0000314249" description="Mediator of RNA polymerase II transcription subunit 13">
    <location>
        <begin position="1"/>
        <end position="1387"/>
    </location>
</feature>
<feature type="region of interest" description="Disordered" evidence="2">
    <location>
        <begin position="81"/>
        <end position="102"/>
    </location>
</feature>
<feature type="region of interest" description="Disordered" evidence="2">
    <location>
        <begin position="354"/>
        <end position="400"/>
    </location>
</feature>
<feature type="region of interest" description="Disordered" evidence="2">
    <location>
        <begin position="620"/>
        <end position="676"/>
    </location>
</feature>
<feature type="compositionally biased region" description="Polar residues" evidence="2">
    <location>
        <begin position="354"/>
        <end position="367"/>
    </location>
</feature>
<feature type="compositionally biased region" description="Polar residues" evidence="2">
    <location>
        <begin position="390"/>
        <end position="400"/>
    </location>
</feature>
<protein>
    <recommendedName>
        <fullName>Mediator of RNA polymerase II transcription subunit 13</fullName>
    </recommendedName>
    <alternativeName>
        <fullName>Mediator complex subunit 13</fullName>
    </alternativeName>
</protein>
<organism>
    <name type="scientific">Kluyveromyces lactis (strain ATCC 8585 / CBS 2359 / DSM 70799 / NBRC 1267 / NRRL Y-1140 / WM37)</name>
    <name type="common">Yeast</name>
    <name type="synonym">Candida sphaerica</name>
    <dbReference type="NCBI Taxonomy" id="284590"/>
    <lineage>
        <taxon>Eukaryota</taxon>
        <taxon>Fungi</taxon>
        <taxon>Dikarya</taxon>
        <taxon>Ascomycota</taxon>
        <taxon>Saccharomycotina</taxon>
        <taxon>Saccharomycetes</taxon>
        <taxon>Saccharomycetales</taxon>
        <taxon>Saccharomycetaceae</taxon>
        <taxon>Kluyveromyces</taxon>
    </lineage>
</organism>
<evidence type="ECO:0000250" key="1"/>
<evidence type="ECO:0000256" key="2">
    <source>
        <dbReference type="SAM" id="MobiDB-lite"/>
    </source>
</evidence>
<evidence type="ECO:0000305" key="3"/>
<gene>
    <name type="primary">SSN2</name>
    <name type="synonym">MED13</name>
    <name type="ordered locus">KLLA0B01353g</name>
</gene>
<sequence>MKKEVGDACRLEDIVTNLYRLETVKQINYHQYVPSKADNQWSIQAELFLRRKNPKVLAALFSRELWCFSINDDPLPELNLELNNESESPQPERKGHFTPEFSKPHLPTPYAIFMKALRRMIYVNLTLSSNETIVPFGNSCIFQESYTFSTKILHFDPHLFENGDLTVAICSKDLGLSKLNAESLKHEVAVYLAPSGIRVYLPSTDLKKCYVSPPKNAQMFLKTLFVSHGINLIDVDGLKWVKLIPNANHLNGFTPTISHYLDEPKGNNFVIWPACLCFVQTASDVQTPQYTAFSRSPQLELDDCFDMIDGFIQLKLTSAYRTPGTSAGMGTVTGHNPLSTGGIFTDQFQGFNKHSANNSNNVSSTGENGKFSPEYSNDPNVTPLRDNKTSRQNFPTESYSSNGFITTPIINENITPTVDDIITETPSVKPQNDLWNEKKDVINSTSNINSKDASVGSSERKVELETAFESPAQNISIEEHEHVEFDKDLFGEDSDEDVSTRNKNEELVSVKEITDEMFDLAEDDDEADGSTSNSLKFDRPDTIESIDTDEKKTRTKRTYLDIPVDVITIEKTPTLYEDPGAPLPIETPKDRKKSIFAPLNFNPIFESNVDNKYKNGGKFSVNSNTNDEPIQFGISTSNISSSEDDDSDFSPADFNNNGPSAGKGLSYDPRDNDIPMIESSTYEPIAKDSLPELINPPSSSKDDSVASYNTIGTLMEKPVKSNLDAIWKPALSKSERADLPNQTINGVINDCNNSSNSNPTTYFENTPSLGPDTLYDNSKPRSSSANFLSTVEIDPKSEQTIQTAEQEQSESSRILPYLLRHMPLFSLPDVFLCQNPSLPPGKDFEDILEILTDQIVFNNDMFSDDRATESQFKGIKDCSVGTISDTMNQLFGNFSKLHGNEIIEEVFYLPEPSVFVKKSEDTIKIKSSSCYFTEYLNLKPNRGVKNFRALVLTTEAKNDCMSFVSQMSQTYSNHELGFCELTKLTNDDNKGLIYLKNFNQDTLLLLSAQIVSFCSTALSNIKNIPLLIFLPINKLSLTECISMILKFHVIRKEFKSKLPKADILLRLVNIDFLKNPLTPITAYTSLCMAIYNSLPPKSTKVTSLTNDLPKQIEFRTLKNASLSIHYDNYIHLAYLRSIDREWLCAAWSDTKGVESFVKTWYVGNSRTRFEQVCNDIWKITLQLASKNFGNVCLVLTRLDSVLPDDELIHWRRLSVATKDLHLAVVCVGDNTKLTLFDEDKTYPTFKNLFRTKSNPQTGISNSIDDLEIINIDEEVHGLIFSNPLQLANSQHRCAIKSGALIRFAKSEGDNFIDKFEVNLLNCPHADSSTLLKEILKQYRNLAGLNPWFGVSYGKDNFIPWHVVAVKNVMNSIVHVKSSFEKETHIID</sequence>
<accession>Q6CWU8</accession>
<comment type="function">
    <text evidence="1">Component of the SRB8-11 complex. The SRB8-11 complex is a regulatory module of the Mediator complex which is itself involved in regulation of basal and activated RNA polymerase II-dependent transcription. The SRB8-11 complex may be involved in the transcriptional repression of a subset of genes regulated by Mediator. It may inhibit the association of the Mediator complex with RNA polymerase II to form the holoenzyme complex (By similarity).</text>
</comment>
<comment type="subunit">
    <text evidence="1">Component of the SRB8-11 complex, which itself associates with the Mediator complex.</text>
</comment>
<comment type="subcellular location">
    <subcellularLocation>
        <location evidence="3">Nucleus</location>
    </subcellularLocation>
</comment>
<comment type="similarity">
    <text evidence="3">Belongs to the Mediator complex subunit 13 family.</text>
</comment>